<organism>
    <name type="scientific">Macaca mulatta</name>
    <name type="common">Rhesus macaque</name>
    <dbReference type="NCBI Taxonomy" id="9544"/>
    <lineage>
        <taxon>Eukaryota</taxon>
        <taxon>Metazoa</taxon>
        <taxon>Chordata</taxon>
        <taxon>Craniata</taxon>
        <taxon>Vertebrata</taxon>
        <taxon>Euteleostomi</taxon>
        <taxon>Mammalia</taxon>
        <taxon>Eutheria</taxon>
        <taxon>Euarchontoglires</taxon>
        <taxon>Primates</taxon>
        <taxon>Haplorrhini</taxon>
        <taxon>Catarrhini</taxon>
        <taxon>Cercopithecidae</taxon>
        <taxon>Cercopithecinae</taxon>
        <taxon>Macaca</taxon>
    </lineage>
</organism>
<evidence type="ECO:0000250" key="1"/>
<evidence type="ECO:0000250" key="2">
    <source>
        <dbReference type="UniProtKB" id="P29460"/>
    </source>
</evidence>
<evidence type="ECO:0000250" key="3">
    <source>
        <dbReference type="UniProtKB" id="P43432"/>
    </source>
</evidence>
<evidence type="ECO:0000255" key="4"/>
<evidence type="ECO:0000255" key="5">
    <source>
        <dbReference type="PROSITE-ProRule" id="PRU00114"/>
    </source>
</evidence>
<evidence type="ECO:0000255" key="6">
    <source>
        <dbReference type="PROSITE-ProRule" id="PRU00316"/>
    </source>
</evidence>
<evidence type="ECO:0000305" key="7"/>
<protein>
    <recommendedName>
        <fullName>Interleukin-12 subunit beta</fullName>
        <shortName>IL-12B</shortName>
    </recommendedName>
    <alternativeName>
        <fullName>Cytotoxic lymphocyte maturation factor 40 kDa subunit</fullName>
        <shortName>CLMF p40</shortName>
    </alternativeName>
    <alternativeName>
        <fullName>IL-12 subunit p40</fullName>
    </alternativeName>
</protein>
<accession>P48095</accession>
<sequence length="328" mass="37273">MCHQQLVISWFSLVFLASPLMAIWELKKDVYVVELDWYPDAPGEMVVLTCDTPEEDGITWTLDQSGEVLGSGKTLTIQVKEFGDAGQYTCHKGGEALSHSLLLLHKKEDGIWSTDVLKDQKEPKNKTFLRCEAKNYSGRFTCWWLTTISTDLTFSVKSSRGSSNPQGVTCGAVTLSAERVRGDNKEYEYSVECQEDSACPAAEERLPIEVMVDAIHKLKYENYTSSFFIRDIIKPDPPKNLQLKPLKNSRQVEVSWEYPDTWSTPHSYFSLTFCIQVQGKSKREKKDRIFTDKTSATVICRKNASFSVQAQDRYYSSSWSEWASVPCS</sequence>
<keyword id="KW-0202">Cytokine</keyword>
<keyword id="KW-1015">Disulfide bond</keyword>
<keyword id="KW-0325">Glycoprotein</keyword>
<keyword id="KW-0393">Immunoglobulin domain</keyword>
<keyword id="KW-1185">Reference proteome</keyword>
<keyword id="KW-0964">Secreted</keyword>
<keyword id="KW-0732">Signal</keyword>
<comment type="function">
    <text evidence="1">Cytokine that can act as a growth factor for activated T and NK cells, enhance the lytic activity of NK/lymphokine-activated killer cells, and stimulate the production of IFN-gamma by resting PBMC.</text>
</comment>
<comment type="function">
    <text evidence="1">Associates with IL23A to form the IL-23 interleukin, a heterodimeric cytokine which functions in innate and adaptive immunity. IL-23 may constitute with IL-17 an acute response to infection in peripheral tissues. IL-23 binds to a heterodimeric receptor complex composed of IL12RB1 and IL23R, activates the Jak-Stat signaling cascade, stimulates memory rather than naive T-cells and promotes production of pro-inflammatory cytokines. IL-23 induces autoimmune inflammation and thus may be responsible for autoimmune inflammatory diseases and may be important for tumorigenesis (By similarity).</text>
</comment>
<comment type="subunit">
    <text evidence="2 3">Heterodimer with IL12A; disulfide-linked. The heterodimer is known as interleukin IL-12. Heterodimer with IL23A; disulfide-linked. The heterodimer is known as interleukin IL-23. Also secreted as a monomer. Interacts with NBR1; this interaction promotes IL-12 secretion (By similarity).</text>
</comment>
<comment type="subcellular location">
    <subcellularLocation>
        <location>Secreted</location>
    </subcellularLocation>
</comment>
<comment type="similarity">
    <text evidence="7">Belongs to the IL-12B family.</text>
</comment>
<feature type="signal peptide" evidence="1">
    <location>
        <begin position="1"/>
        <end position="22"/>
    </location>
</feature>
<feature type="chain" id="PRO_0000010931" description="Interleukin-12 subunit beta">
    <location>
        <begin position="23"/>
        <end position="328"/>
    </location>
</feature>
<feature type="domain" description="Ig-like C2-type">
    <location>
        <begin position="29"/>
        <end position="106"/>
    </location>
</feature>
<feature type="domain" description="Fibronectin type-III" evidence="6">
    <location>
        <begin position="237"/>
        <end position="328"/>
    </location>
</feature>
<feature type="glycosylation site" description="N-linked (GlcNAc...) asparagine" evidence="4">
    <location>
        <position position="125"/>
    </location>
</feature>
<feature type="glycosylation site" description="N-linked (GlcNAc...) asparagine" evidence="4">
    <location>
        <position position="135"/>
    </location>
</feature>
<feature type="glycosylation site" description="N-linked (GlcNAc...) asparagine" evidence="4">
    <location>
        <position position="222"/>
    </location>
</feature>
<feature type="disulfide bond" evidence="5">
    <location>
        <begin position="50"/>
        <end position="90"/>
    </location>
</feature>
<feature type="disulfide bond" description="Interchain (with C-96 in IL12A and C-72 in IL23A)" evidence="2 5">
    <location>
        <position position="199"/>
    </location>
</feature>
<feature type="sequence variant">
    <original>K</original>
    <variation>I</variation>
    <location>
        <position position="106"/>
    </location>
</feature>
<feature type="sequence variant">
    <original>L</original>
    <variation>P</variation>
    <location>
        <position position="206"/>
    </location>
</feature>
<feature type="sequence variant">
    <original>L</original>
    <variation>P</variation>
    <location>
        <position position="218"/>
    </location>
</feature>
<feature type="sequence variant">
    <original>I</original>
    <variation>T</variation>
    <location>
        <position position="289"/>
    </location>
</feature>
<feature type="sequence variant">
    <original>S</original>
    <variation>P</variation>
    <location>
        <position position="295"/>
    </location>
</feature>
<gene>
    <name type="primary">IL12B</name>
</gene>
<reference key="1">
    <citation type="journal article" date="1995" name="J. Immunol.">
        <title>Comparative sequence analysis of cytokine genes from human and nonhuman primates.</title>
        <authorList>
            <person name="Villinger F.J."/>
            <person name="Brar S.S."/>
            <person name="Mayne A.E."/>
            <person name="Chikkala N."/>
            <person name="Ansari A.A."/>
        </authorList>
    </citation>
    <scope>NUCLEOTIDE SEQUENCE [MRNA]</scope>
    <source>
        <tissue>Blood</tissue>
    </source>
</reference>
<name>IL12B_MACMU</name>
<proteinExistence type="evidence at transcript level"/>
<dbReference type="EMBL" id="U19841">
    <property type="protein sequence ID" value="AAB60397.1"/>
    <property type="molecule type" value="mRNA"/>
</dbReference>
<dbReference type="RefSeq" id="NP_001038190.1">
    <property type="nucleotide sequence ID" value="NM_001044725.1"/>
</dbReference>
<dbReference type="RefSeq" id="XP_014996758.1">
    <property type="nucleotide sequence ID" value="XM_015141272.1"/>
</dbReference>
<dbReference type="RefSeq" id="XP_028704875.1">
    <property type="nucleotide sequence ID" value="XM_028849042.1"/>
</dbReference>
<dbReference type="SMR" id="P48095"/>
<dbReference type="FunCoup" id="P48095">
    <property type="interactions" value="529"/>
</dbReference>
<dbReference type="STRING" id="9544.ENSMMUP00000028574"/>
<dbReference type="GlyCosmos" id="P48095">
    <property type="glycosylation" value="3 sites, No reported glycans"/>
</dbReference>
<dbReference type="PaxDb" id="9544-ENSMMUP00000028574"/>
<dbReference type="GeneID" id="694747"/>
<dbReference type="KEGG" id="mcc:694747"/>
<dbReference type="CTD" id="3593"/>
<dbReference type="eggNOG" id="ENOG502RZMA">
    <property type="taxonomic scope" value="Eukaryota"/>
</dbReference>
<dbReference type="HOGENOM" id="CLU_071206_1_0_1"/>
<dbReference type="InParanoid" id="P48095"/>
<dbReference type="OrthoDB" id="8670716at2759"/>
<dbReference type="TreeFam" id="TF334829"/>
<dbReference type="Proteomes" id="UP000006718">
    <property type="component" value="Unassembled WGS sequence"/>
</dbReference>
<dbReference type="GO" id="GO:0043514">
    <property type="term" value="C:interleukin-12 complex"/>
    <property type="evidence" value="ECO:0000318"/>
    <property type="project" value="GO_Central"/>
</dbReference>
<dbReference type="GO" id="GO:0016020">
    <property type="term" value="C:membrane"/>
    <property type="evidence" value="ECO:0007669"/>
    <property type="project" value="InterPro"/>
</dbReference>
<dbReference type="GO" id="GO:0005125">
    <property type="term" value="F:cytokine activity"/>
    <property type="evidence" value="ECO:0007669"/>
    <property type="project" value="UniProtKB-KW"/>
</dbReference>
<dbReference type="GO" id="GO:0004896">
    <property type="term" value="F:cytokine receptor activity"/>
    <property type="evidence" value="ECO:0007669"/>
    <property type="project" value="InterPro"/>
</dbReference>
<dbReference type="GO" id="GO:0042164">
    <property type="term" value="F:interleukin-12 alpha subunit binding"/>
    <property type="evidence" value="ECO:0000318"/>
    <property type="project" value="GO_Central"/>
</dbReference>
<dbReference type="GO" id="GO:0005143">
    <property type="term" value="F:interleukin-12 receptor binding"/>
    <property type="evidence" value="ECO:0000318"/>
    <property type="project" value="GO_Central"/>
</dbReference>
<dbReference type="GO" id="GO:0035722">
    <property type="term" value="P:interleukin-12-mediated signaling pathway"/>
    <property type="evidence" value="ECO:0000318"/>
    <property type="project" value="GO_Central"/>
</dbReference>
<dbReference type="CDD" id="cd00063">
    <property type="entry name" value="FN3"/>
    <property type="match status" value="1"/>
</dbReference>
<dbReference type="FunFam" id="2.60.40.10:FF:000959">
    <property type="entry name" value="Interleukin-12 subunit beta"/>
    <property type="match status" value="1"/>
</dbReference>
<dbReference type="FunFam" id="2.60.40.10:FF:001008">
    <property type="entry name" value="Interleukin-12 subunit beta"/>
    <property type="match status" value="1"/>
</dbReference>
<dbReference type="FunFam" id="2.60.40.10:FF:001009">
    <property type="entry name" value="Interleukin-12 subunit beta"/>
    <property type="match status" value="1"/>
</dbReference>
<dbReference type="Gene3D" id="2.60.40.10">
    <property type="entry name" value="Immunoglobulins"/>
    <property type="match status" value="3"/>
</dbReference>
<dbReference type="InterPro" id="IPR003961">
    <property type="entry name" value="FN3_dom"/>
</dbReference>
<dbReference type="InterPro" id="IPR036116">
    <property type="entry name" value="FN3_sf"/>
</dbReference>
<dbReference type="InterPro" id="IPR003530">
    <property type="entry name" value="Hematopoietin_rcpt_L_F3_CS"/>
</dbReference>
<dbReference type="InterPro" id="IPR007110">
    <property type="entry name" value="Ig-like_dom"/>
</dbReference>
<dbReference type="InterPro" id="IPR036179">
    <property type="entry name" value="Ig-like_dom_sf"/>
</dbReference>
<dbReference type="InterPro" id="IPR013783">
    <property type="entry name" value="Ig-like_fold"/>
</dbReference>
<dbReference type="InterPro" id="IPR003598">
    <property type="entry name" value="Ig_sub2"/>
</dbReference>
<dbReference type="InterPro" id="IPR050676">
    <property type="entry name" value="IL-12"/>
</dbReference>
<dbReference type="InterPro" id="IPR015528">
    <property type="entry name" value="IL-12_beta"/>
</dbReference>
<dbReference type="InterPro" id="IPR019482">
    <property type="entry name" value="IL-12_beta_cen-dom"/>
</dbReference>
<dbReference type="PANTHER" id="PTHR48485:SF4">
    <property type="entry name" value="INTERLEUKIN-12 SUBUNIT BETA"/>
    <property type="match status" value="1"/>
</dbReference>
<dbReference type="PANTHER" id="PTHR48485">
    <property type="entry name" value="INTERLEUKIN-12 SUBUNIT BETA-RELATED"/>
    <property type="match status" value="1"/>
</dbReference>
<dbReference type="Pfam" id="PF10420">
    <property type="entry name" value="IL12p40_C"/>
    <property type="match status" value="1"/>
</dbReference>
<dbReference type="PIRSF" id="PIRSF038007">
    <property type="entry name" value="IL_12_beta"/>
    <property type="match status" value="1"/>
</dbReference>
<dbReference type="PRINTS" id="PR01928">
    <property type="entry name" value="INTRLEUKN12B"/>
</dbReference>
<dbReference type="SMART" id="SM00408">
    <property type="entry name" value="IGc2"/>
    <property type="match status" value="1"/>
</dbReference>
<dbReference type="SUPFAM" id="SSF49265">
    <property type="entry name" value="Fibronectin type III"/>
    <property type="match status" value="2"/>
</dbReference>
<dbReference type="SUPFAM" id="SSF48726">
    <property type="entry name" value="Immunoglobulin"/>
    <property type="match status" value="1"/>
</dbReference>
<dbReference type="PROSITE" id="PS50853">
    <property type="entry name" value="FN3"/>
    <property type="match status" value="1"/>
</dbReference>
<dbReference type="PROSITE" id="PS01354">
    <property type="entry name" value="HEMATOPO_REC_L_F3"/>
    <property type="match status" value="1"/>
</dbReference>
<dbReference type="PROSITE" id="PS50835">
    <property type="entry name" value="IG_LIKE"/>
    <property type="match status" value="1"/>
</dbReference>